<feature type="chain" id="PRO_0000348763" description="tRNA-cytidine(32) 2-sulfurtransferase">
    <location>
        <begin position="1"/>
        <end position="312"/>
    </location>
</feature>
<feature type="short sequence motif" description="PP-loop motif" evidence="1">
    <location>
        <begin position="48"/>
        <end position="53"/>
    </location>
</feature>
<feature type="binding site" evidence="1">
    <location>
        <position position="123"/>
    </location>
    <ligand>
        <name>[4Fe-4S] cluster</name>
        <dbReference type="ChEBI" id="CHEBI:49883"/>
    </ligand>
</feature>
<feature type="binding site" evidence="1">
    <location>
        <position position="126"/>
    </location>
    <ligand>
        <name>[4Fe-4S] cluster</name>
        <dbReference type="ChEBI" id="CHEBI:49883"/>
    </ligand>
</feature>
<feature type="binding site" evidence="1">
    <location>
        <position position="214"/>
    </location>
    <ligand>
        <name>[4Fe-4S] cluster</name>
        <dbReference type="ChEBI" id="CHEBI:49883"/>
    </ligand>
</feature>
<sequence>MTELETKENKKQIYNFNKLQKRLRRNVGNAIADFNMIEDGDKVMVCLSGGKDSYTLLDILLNLRHNAPVHFDIVAVNLDQKQPGFPEHILPEYLSSIGVEYKIVEENTYGIVKEKIPEGKTTCSLCSRLRRGILYRTATELGATKIALGHHRDDMLETLFLNMFYGGKLKSMPPKLVSDDGKQIVIRPLAYCKEKDIEKYAVAKQFPIIPCNLCGSQPNLQRQVIKEMLQTWDRRYPGRIETMFSAIQNITPSHLCDPNLFDFKNIKRGQLPKGVEGDIAFDKEELPQTPIIDEDTEDFVNNGQLIRFKEVN</sequence>
<organism>
    <name type="scientific">Mannheimia succiniciproducens (strain KCTC 0769BP / MBEL55E)</name>
    <dbReference type="NCBI Taxonomy" id="221988"/>
    <lineage>
        <taxon>Bacteria</taxon>
        <taxon>Pseudomonadati</taxon>
        <taxon>Pseudomonadota</taxon>
        <taxon>Gammaproteobacteria</taxon>
        <taxon>Pasteurellales</taxon>
        <taxon>Pasteurellaceae</taxon>
        <taxon>Basfia</taxon>
    </lineage>
</organism>
<comment type="function">
    <text evidence="1">Catalyzes the ATP-dependent 2-thiolation of cytidine in position 32 of tRNA, to form 2-thiocytidine (s(2)C32). The sulfur atoms are provided by the cysteine/cysteine desulfurase (IscS) system.</text>
</comment>
<comment type="catalytic activity">
    <reaction evidence="1">
        <text>cytidine(32) in tRNA + S-sulfanyl-L-cysteinyl-[cysteine desulfurase] + AH2 + ATP = 2-thiocytidine(32) in tRNA + L-cysteinyl-[cysteine desulfurase] + A + AMP + diphosphate + H(+)</text>
        <dbReference type="Rhea" id="RHEA:57048"/>
        <dbReference type="Rhea" id="RHEA-COMP:10288"/>
        <dbReference type="Rhea" id="RHEA-COMP:12157"/>
        <dbReference type="Rhea" id="RHEA-COMP:12158"/>
        <dbReference type="Rhea" id="RHEA-COMP:14821"/>
        <dbReference type="ChEBI" id="CHEBI:13193"/>
        <dbReference type="ChEBI" id="CHEBI:15378"/>
        <dbReference type="ChEBI" id="CHEBI:17499"/>
        <dbReference type="ChEBI" id="CHEBI:29950"/>
        <dbReference type="ChEBI" id="CHEBI:30616"/>
        <dbReference type="ChEBI" id="CHEBI:33019"/>
        <dbReference type="ChEBI" id="CHEBI:61963"/>
        <dbReference type="ChEBI" id="CHEBI:82748"/>
        <dbReference type="ChEBI" id="CHEBI:141453"/>
        <dbReference type="ChEBI" id="CHEBI:456215"/>
    </reaction>
    <physiologicalReaction direction="left-to-right" evidence="1">
        <dbReference type="Rhea" id="RHEA:57049"/>
    </physiologicalReaction>
</comment>
<comment type="cofactor">
    <cofactor evidence="1">
        <name>Mg(2+)</name>
        <dbReference type="ChEBI" id="CHEBI:18420"/>
    </cofactor>
</comment>
<comment type="cofactor">
    <cofactor evidence="1">
        <name>[4Fe-4S] cluster</name>
        <dbReference type="ChEBI" id="CHEBI:49883"/>
    </cofactor>
    <text evidence="1">Binds 1 [4Fe-4S] cluster per subunit. The cluster is chelated by three Cys residues, the fourth Fe has a free coordination site that may bind a sulfur atom transferred from the persulfide of IscS.</text>
</comment>
<comment type="pathway">
    <text evidence="1">tRNA modification.</text>
</comment>
<comment type="subunit">
    <text evidence="1">Homodimer.</text>
</comment>
<comment type="subcellular location">
    <subcellularLocation>
        <location evidence="1">Cytoplasm</location>
    </subcellularLocation>
</comment>
<comment type="miscellaneous">
    <text evidence="1">The thiolation reaction likely consists of two steps: a first activation step by ATP to form an adenylated intermediate of the target base of tRNA, and a second nucleophilic substitution step of the sulfur (S) atom supplied by the hydrosulfide attached to the Fe-S cluster.</text>
</comment>
<comment type="similarity">
    <text evidence="1">Belongs to the TtcA family.</text>
</comment>
<protein>
    <recommendedName>
        <fullName evidence="1">tRNA-cytidine(32) 2-sulfurtransferase</fullName>
        <ecNumber evidence="1">2.8.1.-</ecNumber>
    </recommendedName>
    <alternativeName>
        <fullName evidence="1">Two-thiocytidine biosynthesis protein A</fullName>
    </alternativeName>
    <alternativeName>
        <fullName evidence="1">tRNA 2-thiocytidine biosynthesis protein TtcA</fullName>
    </alternativeName>
</protein>
<keyword id="KW-0004">4Fe-4S</keyword>
<keyword id="KW-0067">ATP-binding</keyword>
<keyword id="KW-0963">Cytoplasm</keyword>
<keyword id="KW-0408">Iron</keyword>
<keyword id="KW-0411">Iron-sulfur</keyword>
<keyword id="KW-0460">Magnesium</keyword>
<keyword id="KW-0479">Metal-binding</keyword>
<keyword id="KW-0547">Nucleotide-binding</keyword>
<keyword id="KW-0694">RNA-binding</keyword>
<keyword id="KW-0808">Transferase</keyword>
<keyword id="KW-0819">tRNA processing</keyword>
<keyword id="KW-0820">tRNA-binding</keyword>
<accession>Q65TL6</accession>
<proteinExistence type="inferred from homology"/>
<gene>
    <name evidence="1" type="primary">ttcA</name>
    <name type="ordered locus">MS1087</name>
</gene>
<reference key="1">
    <citation type="journal article" date="2004" name="Nat. Biotechnol.">
        <title>The genome sequence of the capnophilic rumen bacterium Mannheimia succiniciproducens.</title>
        <authorList>
            <person name="Hong S.H."/>
            <person name="Kim J.S."/>
            <person name="Lee S.Y."/>
            <person name="In Y.H."/>
            <person name="Choi S.S."/>
            <person name="Rih J.-K."/>
            <person name="Kim C.H."/>
            <person name="Jeong H."/>
            <person name="Hur C.G."/>
            <person name="Kim J.J."/>
        </authorList>
    </citation>
    <scope>NUCLEOTIDE SEQUENCE [LARGE SCALE GENOMIC DNA]</scope>
    <source>
        <strain>KCTC 0769BP / MBEL55E</strain>
    </source>
</reference>
<evidence type="ECO:0000255" key="1">
    <source>
        <dbReference type="HAMAP-Rule" id="MF_01850"/>
    </source>
</evidence>
<name>TTCA_MANSM</name>
<dbReference type="EC" id="2.8.1.-" evidence="1"/>
<dbReference type="EMBL" id="AE016827">
    <property type="protein sequence ID" value="AAU37694.1"/>
    <property type="molecule type" value="Genomic_DNA"/>
</dbReference>
<dbReference type="RefSeq" id="WP_011200262.1">
    <property type="nucleotide sequence ID" value="NC_006300.1"/>
</dbReference>
<dbReference type="SMR" id="Q65TL6"/>
<dbReference type="STRING" id="221988.MS1087"/>
<dbReference type="KEGG" id="msu:MS1087"/>
<dbReference type="eggNOG" id="COG0037">
    <property type="taxonomic scope" value="Bacteria"/>
</dbReference>
<dbReference type="HOGENOM" id="CLU_026481_0_0_6"/>
<dbReference type="OrthoDB" id="9801054at2"/>
<dbReference type="Proteomes" id="UP000000607">
    <property type="component" value="Chromosome"/>
</dbReference>
<dbReference type="GO" id="GO:0005737">
    <property type="term" value="C:cytoplasm"/>
    <property type="evidence" value="ECO:0007669"/>
    <property type="project" value="UniProtKB-SubCell"/>
</dbReference>
<dbReference type="GO" id="GO:0051539">
    <property type="term" value="F:4 iron, 4 sulfur cluster binding"/>
    <property type="evidence" value="ECO:0007669"/>
    <property type="project" value="UniProtKB-UniRule"/>
</dbReference>
<dbReference type="GO" id="GO:0005524">
    <property type="term" value="F:ATP binding"/>
    <property type="evidence" value="ECO:0007669"/>
    <property type="project" value="UniProtKB-UniRule"/>
</dbReference>
<dbReference type="GO" id="GO:0000287">
    <property type="term" value="F:magnesium ion binding"/>
    <property type="evidence" value="ECO:0007669"/>
    <property type="project" value="UniProtKB-UniRule"/>
</dbReference>
<dbReference type="GO" id="GO:0016783">
    <property type="term" value="F:sulfurtransferase activity"/>
    <property type="evidence" value="ECO:0007669"/>
    <property type="project" value="UniProtKB-UniRule"/>
</dbReference>
<dbReference type="GO" id="GO:0000049">
    <property type="term" value="F:tRNA binding"/>
    <property type="evidence" value="ECO:0007669"/>
    <property type="project" value="UniProtKB-KW"/>
</dbReference>
<dbReference type="GO" id="GO:0034227">
    <property type="term" value="P:tRNA thio-modification"/>
    <property type="evidence" value="ECO:0007669"/>
    <property type="project" value="UniProtKB-UniRule"/>
</dbReference>
<dbReference type="CDD" id="cd24138">
    <property type="entry name" value="TtcA-like"/>
    <property type="match status" value="1"/>
</dbReference>
<dbReference type="Gene3D" id="3.40.50.620">
    <property type="entry name" value="HUPs"/>
    <property type="match status" value="1"/>
</dbReference>
<dbReference type="HAMAP" id="MF_01850">
    <property type="entry name" value="TtcA"/>
    <property type="match status" value="1"/>
</dbReference>
<dbReference type="InterPro" id="IPR014729">
    <property type="entry name" value="Rossmann-like_a/b/a_fold"/>
</dbReference>
<dbReference type="InterPro" id="IPR011063">
    <property type="entry name" value="TilS/TtcA_N"/>
</dbReference>
<dbReference type="InterPro" id="IPR012089">
    <property type="entry name" value="tRNA_Cyd_32_2_STrfase"/>
</dbReference>
<dbReference type="InterPro" id="IPR035107">
    <property type="entry name" value="tRNA_thiolation_TtcA_Ctu1"/>
</dbReference>
<dbReference type="NCBIfam" id="NF007972">
    <property type="entry name" value="PRK10696.1"/>
    <property type="match status" value="1"/>
</dbReference>
<dbReference type="PANTHER" id="PTHR43686:SF1">
    <property type="entry name" value="AMINOTRAN_5 DOMAIN-CONTAINING PROTEIN"/>
    <property type="match status" value="1"/>
</dbReference>
<dbReference type="PANTHER" id="PTHR43686">
    <property type="entry name" value="SULFURTRANSFERASE-RELATED"/>
    <property type="match status" value="1"/>
</dbReference>
<dbReference type="Pfam" id="PF01171">
    <property type="entry name" value="ATP_bind_3"/>
    <property type="match status" value="1"/>
</dbReference>
<dbReference type="PIRSF" id="PIRSF004976">
    <property type="entry name" value="ATPase_YdaO"/>
    <property type="match status" value="1"/>
</dbReference>
<dbReference type="SUPFAM" id="SSF52402">
    <property type="entry name" value="Adenine nucleotide alpha hydrolases-like"/>
    <property type="match status" value="1"/>
</dbReference>